<comment type="function">
    <text evidence="1">Core component of nucleosome. Nucleosomes wrap and compact DNA into chromatin, limiting DNA accessibility to the cellular machineries which require DNA as a template. Histones thereby play a central role in transcription regulation, DNA repair, DNA replication and chromosomal stability. DNA accessibility is regulated via a complex set of post-translational modifications of histones, also called histone code, and nucleosome remodeling (By similarity).</text>
</comment>
<comment type="subunit">
    <text>The nucleosome is a histone octamer containing two molecules each of H2A, H2B, H3 and H4 assembled in one H3-H4 heterotetramer and two H2A-H2B heterodimers. The octamer wraps approximately 147 bp of DNA.</text>
</comment>
<comment type="subcellular location">
    <subcellularLocation>
        <location evidence="4">Nucleus</location>
        <location evidence="4">Nucleolus</location>
    </subcellularLocation>
    <subcellularLocation>
        <location evidence="4">Chromosome</location>
    </subcellularLocation>
</comment>
<comment type="tissue specificity">
    <text evidence="4">Expressed in bicellular pollen, root tips, shoot apices, young leaves and ovules.</text>
</comment>
<comment type="developmental stage">
    <text evidence="4">Within the bicellular pollen, only detected in the generative cell and not in the vegetative cell. Expressed during the S-phase.</text>
</comment>
<comment type="PTM">
    <text evidence="1">Acetylation is generally linked to gene activation. Can be acetylated to form H3K9ac, H3K14ac, H3K18ac and H3K23ac. H3K9ac could compete with H3K9me and prevent gene silencing. H3K9ac is restricted to euchromatin (By similarity).</text>
</comment>
<comment type="PTM">
    <text evidence="1">Methylated to form mainly H3K4me, H3K9me, H3K18me, H3K23me, H3K27me and H3K36me. H3K4me1/2/3, H3K9me3, H3K27me3 and H3K36me1/2/3 are typical marks for euchromatin, whereas heterochromatic chromocenters are enriched in H3K9me1/2 and H3K27me1/2. H2BK143ub1 is probably prerequisite for H3K4me (By similarity).</text>
</comment>
<comment type="PTM">
    <text evidence="1">Can be phosphorylated to form H3S10ph, H3T11ph and H3S28ph.</text>
</comment>
<comment type="similarity">
    <text evidence="5">Belongs to the histone H3 family.</text>
</comment>
<comment type="caution">
    <text evidence="5">To ensure consistency between histone entries, we follow the 'Brno' nomenclature for histone modifications, with positions referring to those used in the literature for the 'closest' model organism. Due to slight variations in histone sequences between organisms and to the presence of initiator methionine in UniProtKB/Swiss-Prot sequences, the actual positions of modified amino acids in the sequence generally differ. In this entry the following conventions are used: H3K4me = methylated Lys-5; H3K9ac = acetylated Lys-10; H3K9me = methylated Lys-10; H3S10ph = phosphorylated Ser-11; H3T11ph = phosphorylated Thr-12; H3K14ac = acetylated Lys-15; H3K18ac = acetylated Lys-19; H3K18me = methylated Lys-19; H3K23ac = acetylated Lys-24; H3K23me = methylated Lys-24; H3K27me = methylated Lys-28; H3S28ph = phosphorylated Ser-29; H3K36me = methylated Lys-37.</text>
</comment>
<accession>Q402E1</accession>
<gene>
    <name type="primary">YAH3</name>
</gene>
<dbReference type="EMBL" id="AB195975">
    <property type="protein sequence ID" value="BAE20250.1"/>
    <property type="molecule type" value="mRNA"/>
</dbReference>
<dbReference type="SMR" id="Q402E1"/>
<dbReference type="GO" id="GO:0005730">
    <property type="term" value="C:nucleolus"/>
    <property type="evidence" value="ECO:0007669"/>
    <property type="project" value="UniProtKB-SubCell"/>
</dbReference>
<dbReference type="GO" id="GO:0000786">
    <property type="term" value="C:nucleosome"/>
    <property type="evidence" value="ECO:0007669"/>
    <property type="project" value="UniProtKB-KW"/>
</dbReference>
<dbReference type="GO" id="GO:0003677">
    <property type="term" value="F:DNA binding"/>
    <property type="evidence" value="ECO:0007669"/>
    <property type="project" value="UniProtKB-KW"/>
</dbReference>
<dbReference type="GO" id="GO:0046982">
    <property type="term" value="F:protein heterodimerization activity"/>
    <property type="evidence" value="ECO:0007669"/>
    <property type="project" value="InterPro"/>
</dbReference>
<dbReference type="GO" id="GO:0030527">
    <property type="term" value="F:structural constituent of chromatin"/>
    <property type="evidence" value="ECO:0007669"/>
    <property type="project" value="InterPro"/>
</dbReference>
<dbReference type="CDD" id="cd22911">
    <property type="entry name" value="HFD_H3"/>
    <property type="match status" value="1"/>
</dbReference>
<dbReference type="FunFam" id="1.10.20.10:FF:000078">
    <property type="entry name" value="Histone H3"/>
    <property type="match status" value="1"/>
</dbReference>
<dbReference type="FunFam" id="1.10.20.10:FF:000044">
    <property type="entry name" value="Histone H3.3"/>
    <property type="match status" value="1"/>
</dbReference>
<dbReference type="Gene3D" id="1.10.20.10">
    <property type="entry name" value="Histone, subunit A"/>
    <property type="match status" value="1"/>
</dbReference>
<dbReference type="InterPro" id="IPR009072">
    <property type="entry name" value="Histone-fold"/>
</dbReference>
<dbReference type="InterPro" id="IPR007125">
    <property type="entry name" value="Histone_H2A/H2B/H3"/>
</dbReference>
<dbReference type="InterPro" id="IPR000164">
    <property type="entry name" value="Histone_H3/CENP-A"/>
</dbReference>
<dbReference type="PANTHER" id="PTHR11426">
    <property type="entry name" value="HISTONE H3"/>
    <property type="match status" value="1"/>
</dbReference>
<dbReference type="Pfam" id="PF00125">
    <property type="entry name" value="Histone"/>
    <property type="match status" value="1"/>
</dbReference>
<dbReference type="PRINTS" id="PR00622">
    <property type="entry name" value="HISTONEH3"/>
</dbReference>
<dbReference type="SMART" id="SM00428">
    <property type="entry name" value="H3"/>
    <property type="match status" value="1"/>
</dbReference>
<dbReference type="SUPFAM" id="SSF47113">
    <property type="entry name" value="Histone-fold"/>
    <property type="match status" value="1"/>
</dbReference>
<dbReference type="PROSITE" id="PS00322">
    <property type="entry name" value="HISTONE_H3_1"/>
    <property type="match status" value="1"/>
</dbReference>
<dbReference type="PROSITE" id="PS00959">
    <property type="entry name" value="HISTONE_H3_2"/>
    <property type="match status" value="1"/>
</dbReference>
<sequence length="136" mass="15270">MARTKQTARKSTGGKAPRKQLATKAARKSAPATGGVKKPHRFRPGTVALREIRKYQKSTELLIRKLPFQRLVREIAQDFKADLRFQSSAVAALQEASESYLVGLFEDTNLCAIHAKRVTIMPKDIQLARRIRGERA</sequence>
<name>H32_LILLO</name>
<feature type="initiator methionine" description="Removed" evidence="3">
    <location>
        <position position="1"/>
    </location>
</feature>
<feature type="chain" id="PRO_0000263046" description="Histone H3.2">
    <location>
        <begin position="2"/>
        <end position="136"/>
    </location>
</feature>
<feature type="region of interest" description="Disordered" evidence="2">
    <location>
        <begin position="1"/>
        <end position="43"/>
    </location>
</feature>
<feature type="modified residue" description="N6-methylated lysine" evidence="1">
    <location>
        <position position="5"/>
    </location>
</feature>
<feature type="modified residue" description="N6-acetyllysine; alternate" evidence="1">
    <location>
        <position position="10"/>
    </location>
</feature>
<feature type="modified residue" description="N6-methylated lysine; alternate" evidence="1">
    <location>
        <position position="10"/>
    </location>
</feature>
<feature type="modified residue" description="Phosphoserine" evidence="1">
    <location>
        <position position="11"/>
    </location>
</feature>
<feature type="modified residue" description="Phosphothreonine" evidence="1">
    <location>
        <position position="12"/>
    </location>
</feature>
<feature type="modified residue" description="N6-acetyllysine" evidence="1">
    <location>
        <position position="15"/>
    </location>
</feature>
<feature type="modified residue" description="N6-acetyllysine; alternate" evidence="1">
    <location>
        <position position="19"/>
    </location>
</feature>
<feature type="modified residue" description="N6-methylated lysine; alternate" evidence="1">
    <location>
        <position position="19"/>
    </location>
</feature>
<feature type="modified residue" description="N6-acetyllysine; alternate" evidence="1">
    <location>
        <position position="24"/>
    </location>
</feature>
<feature type="modified residue" description="N6-methylated lysine; alternate" evidence="1">
    <location>
        <position position="24"/>
    </location>
</feature>
<feature type="modified residue" description="N6-methylated lysine" evidence="1">
    <location>
        <position position="28"/>
    </location>
</feature>
<feature type="modified residue" description="Phosphoserine" evidence="1">
    <location>
        <position position="29"/>
    </location>
</feature>
<feature type="modified residue" description="N6-methylated lysine" evidence="1">
    <location>
        <position position="37"/>
    </location>
</feature>
<protein>
    <recommendedName>
        <fullName>Histone H3.2</fullName>
    </recommendedName>
</protein>
<reference key="1">
    <citation type="journal article" date="2005" name="Plant Cell Physiol.">
        <title>A histone H3.3-like gene specifically expressed in the vegetative cell of developing lily pollen.</title>
        <authorList>
            <person name="Sano Y."/>
            <person name="Tanaka I."/>
        </authorList>
    </citation>
    <scope>NUCLEOTIDE SEQUENCE [MRNA]</scope>
    <scope>SUBCELLULAR LOCATION</scope>
    <scope>DEVELOPMENTAL STAGE</scope>
    <scope>TISSUE SPECIFICITY</scope>
    <source>
        <strain>cv. Hinomoto</strain>
    </source>
</reference>
<reference key="2">
    <citation type="journal article" date="2000" name="Chromosoma">
        <title>Unusual core histones specifically expressed in male gametic cells of Lilium longiflorum.</title>
        <authorList>
            <person name="Ueda K."/>
            <person name="Kinoshita Y."/>
            <person name="Xu Z.-J."/>
            <person name="Ide N."/>
            <person name="Ono M."/>
            <person name="Akahori Y."/>
            <person name="Tanaka I."/>
            <person name="Inoue M."/>
        </authorList>
    </citation>
    <scope>PROTEIN SEQUENCE OF 2-22</scope>
</reference>
<keyword id="KW-0007">Acetylation</keyword>
<keyword id="KW-0158">Chromosome</keyword>
<keyword id="KW-0903">Direct protein sequencing</keyword>
<keyword id="KW-0238">DNA-binding</keyword>
<keyword id="KW-0488">Methylation</keyword>
<keyword id="KW-0544">Nucleosome core</keyword>
<keyword id="KW-0539">Nucleus</keyword>
<keyword id="KW-0597">Phosphoprotein</keyword>
<organism>
    <name type="scientific">Lilium longiflorum</name>
    <name type="common">Trumpet lily</name>
    <dbReference type="NCBI Taxonomy" id="4690"/>
    <lineage>
        <taxon>Eukaryota</taxon>
        <taxon>Viridiplantae</taxon>
        <taxon>Streptophyta</taxon>
        <taxon>Embryophyta</taxon>
        <taxon>Tracheophyta</taxon>
        <taxon>Spermatophyta</taxon>
        <taxon>Magnoliopsida</taxon>
        <taxon>Liliopsida</taxon>
        <taxon>Liliales</taxon>
        <taxon>Liliaceae</taxon>
        <taxon>Lilium</taxon>
    </lineage>
</organism>
<proteinExistence type="evidence at protein level"/>
<evidence type="ECO:0000250" key="1"/>
<evidence type="ECO:0000256" key="2">
    <source>
        <dbReference type="SAM" id="MobiDB-lite"/>
    </source>
</evidence>
<evidence type="ECO:0000269" key="3">
    <source>
    </source>
</evidence>
<evidence type="ECO:0000269" key="4">
    <source>
    </source>
</evidence>
<evidence type="ECO:0000305" key="5"/>